<accession>Q8E600</accession>
<organism>
    <name type="scientific">Streptococcus agalactiae serotype III (strain NEM316)</name>
    <dbReference type="NCBI Taxonomy" id="211110"/>
    <lineage>
        <taxon>Bacteria</taxon>
        <taxon>Bacillati</taxon>
        <taxon>Bacillota</taxon>
        <taxon>Bacilli</taxon>
        <taxon>Lactobacillales</taxon>
        <taxon>Streptococcaceae</taxon>
        <taxon>Streptococcus</taxon>
    </lineage>
</organism>
<name>SYA_STRA3</name>
<dbReference type="EC" id="6.1.1.7" evidence="1"/>
<dbReference type="EMBL" id="AL766847">
    <property type="protein sequence ID" value="CAD46473.1"/>
    <property type="molecule type" value="Genomic_DNA"/>
</dbReference>
<dbReference type="RefSeq" id="WP_000661545.1">
    <property type="nucleotide sequence ID" value="NC_004368.1"/>
</dbReference>
<dbReference type="SMR" id="Q8E600"/>
<dbReference type="KEGG" id="san:alaS"/>
<dbReference type="eggNOG" id="COG0013">
    <property type="taxonomic scope" value="Bacteria"/>
</dbReference>
<dbReference type="HOGENOM" id="CLU_004485_1_1_9"/>
<dbReference type="Proteomes" id="UP000000823">
    <property type="component" value="Chromosome"/>
</dbReference>
<dbReference type="GO" id="GO:0005829">
    <property type="term" value="C:cytosol"/>
    <property type="evidence" value="ECO:0007669"/>
    <property type="project" value="TreeGrafter"/>
</dbReference>
<dbReference type="GO" id="GO:0004813">
    <property type="term" value="F:alanine-tRNA ligase activity"/>
    <property type="evidence" value="ECO:0007669"/>
    <property type="project" value="UniProtKB-UniRule"/>
</dbReference>
<dbReference type="GO" id="GO:0002161">
    <property type="term" value="F:aminoacyl-tRNA deacylase activity"/>
    <property type="evidence" value="ECO:0007669"/>
    <property type="project" value="TreeGrafter"/>
</dbReference>
<dbReference type="GO" id="GO:0005524">
    <property type="term" value="F:ATP binding"/>
    <property type="evidence" value="ECO:0007669"/>
    <property type="project" value="UniProtKB-UniRule"/>
</dbReference>
<dbReference type="GO" id="GO:0140096">
    <property type="term" value="F:catalytic activity, acting on a protein"/>
    <property type="evidence" value="ECO:0007669"/>
    <property type="project" value="UniProtKB-ARBA"/>
</dbReference>
<dbReference type="GO" id="GO:0016740">
    <property type="term" value="F:transferase activity"/>
    <property type="evidence" value="ECO:0007669"/>
    <property type="project" value="UniProtKB-ARBA"/>
</dbReference>
<dbReference type="GO" id="GO:0000049">
    <property type="term" value="F:tRNA binding"/>
    <property type="evidence" value="ECO:0007669"/>
    <property type="project" value="UniProtKB-KW"/>
</dbReference>
<dbReference type="GO" id="GO:0008270">
    <property type="term" value="F:zinc ion binding"/>
    <property type="evidence" value="ECO:0007669"/>
    <property type="project" value="UniProtKB-UniRule"/>
</dbReference>
<dbReference type="GO" id="GO:0006419">
    <property type="term" value="P:alanyl-tRNA aminoacylation"/>
    <property type="evidence" value="ECO:0007669"/>
    <property type="project" value="UniProtKB-UniRule"/>
</dbReference>
<dbReference type="CDD" id="cd00673">
    <property type="entry name" value="AlaRS_core"/>
    <property type="match status" value="1"/>
</dbReference>
<dbReference type="FunFam" id="3.10.310.40:FF:000001">
    <property type="entry name" value="Alanine--tRNA ligase"/>
    <property type="match status" value="1"/>
</dbReference>
<dbReference type="FunFam" id="3.30.54.20:FF:000001">
    <property type="entry name" value="Alanine--tRNA ligase"/>
    <property type="match status" value="1"/>
</dbReference>
<dbReference type="FunFam" id="3.30.930.10:FF:000046">
    <property type="entry name" value="Alanine--tRNA ligase"/>
    <property type="match status" value="1"/>
</dbReference>
<dbReference type="FunFam" id="3.30.980.10:FF:000004">
    <property type="entry name" value="Alanine--tRNA ligase, cytoplasmic"/>
    <property type="match status" value="1"/>
</dbReference>
<dbReference type="Gene3D" id="2.40.30.130">
    <property type="match status" value="1"/>
</dbReference>
<dbReference type="Gene3D" id="3.10.310.40">
    <property type="match status" value="1"/>
</dbReference>
<dbReference type="Gene3D" id="3.30.54.20">
    <property type="match status" value="1"/>
</dbReference>
<dbReference type="Gene3D" id="6.10.250.550">
    <property type="match status" value="1"/>
</dbReference>
<dbReference type="Gene3D" id="3.30.930.10">
    <property type="entry name" value="Bira Bifunctional Protein, Domain 2"/>
    <property type="match status" value="1"/>
</dbReference>
<dbReference type="Gene3D" id="3.30.980.10">
    <property type="entry name" value="Threonyl-trna Synthetase, Chain A, domain 2"/>
    <property type="match status" value="1"/>
</dbReference>
<dbReference type="HAMAP" id="MF_00036_B">
    <property type="entry name" value="Ala_tRNA_synth_B"/>
    <property type="match status" value="1"/>
</dbReference>
<dbReference type="InterPro" id="IPR045864">
    <property type="entry name" value="aa-tRNA-synth_II/BPL/LPL"/>
</dbReference>
<dbReference type="InterPro" id="IPR002318">
    <property type="entry name" value="Ala-tRNA-lgiase_IIc"/>
</dbReference>
<dbReference type="InterPro" id="IPR018162">
    <property type="entry name" value="Ala-tRNA-ligase_IIc_anticod-bd"/>
</dbReference>
<dbReference type="InterPro" id="IPR018165">
    <property type="entry name" value="Ala-tRNA-synth_IIc_core"/>
</dbReference>
<dbReference type="InterPro" id="IPR018164">
    <property type="entry name" value="Ala-tRNA-synth_IIc_N"/>
</dbReference>
<dbReference type="InterPro" id="IPR050058">
    <property type="entry name" value="Ala-tRNA_ligase"/>
</dbReference>
<dbReference type="InterPro" id="IPR023033">
    <property type="entry name" value="Ala_tRNA_ligase_euk/bac"/>
</dbReference>
<dbReference type="InterPro" id="IPR003156">
    <property type="entry name" value="DHHA1_dom"/>
</dbReference>
<dbReference type="InterPro" id="IPR018163">
    <property type="entry name" value="Thr/Ala-tRNA-synth_IIc_edit"/>
</dbReference>
<dbReference type="InterPro" id="IPR009000">
    <property type="entry name" value="Transl_B-barrel_sf"/>
</dbReference>
<dbReference type="InterPro" id="IPR012947">
    <property type="entry name" value="tRNA_SAD"/>
</dbReference>
<dbReference type="NCBIfam" id="TIGR00344">
    <property type="entry name" value="alaS"/>
    <property type="match status" value="1"/>
</dbReference>
<dbReference type="PANTHER" id="PTHR11777:SF9">
    <property type="entry name" value="ALANINE--TRNA LIGASE, CYTOPLASMIC"/>
    <property type="match status" value="1"/>
</dbReference>
<dbReference type="PANTHER" id="PTHR11777">
    <property type="entry name" value="ALANYL-TRNA SYNTHETASE"/>
    <property type="match status" value="1"/>
</dbReference>
<dbReference type="Pfam" id="PF02272">
    <property type="entry name" value="DHHA1"/>
    <property type="match status" value="1"/>
</dbReference>
<dbReference type="Pfam" id="PF01411">
    <property type="entry name" value="tRNA-synt_2c"/>
    <property type="match status" value="1"/>
</dbReference>
<dbReference type="Pfam" id="PF07973">
    <property type="entry name" value="tRNA_SAD"/>
    <property type="match status" value="1"/>
</dbReference>
<dbReference type="PRINTS" id="PR00980">
    <property type="entry name" value="TRNASYNTHALA"/>
</dbReference>
<dbReference type="SMART" id="SM00863">
    <property type="entry name" value="tRNA_SAD"/>
    <property type="match status" value="1"/>
</dbReference>
<dbReference type="SUPFAM" id="SSF55681">
    <property type="entry name" value="Class II aaRS and biotin synthetases"/>
    <property type="match status" value="1"/>
</dbReference>
<dbReference type="SUPFAM" id="SSF101353">
    <property type="entry name" value="Putative anticodon-binding domain of alanyl-tRNA synthetase (AlaRS)"/>
    <property type="match status" value="1"/>
</dbReference>
<dbReference type="SUPFAM" id="SSF55186">
    <property type="entry name" value="ThrRS/AlaRS common domain"/>
    <property type="match status" value="1"/>
</dbReference>
<dbReference type="SUPFAM" id="SSF50447">
    <property type="entry name" value="Translation proteins"/>
    <property type="match status" value="1"/>
</dbReference>
<dbReference type="PROSITE" id="PS50860">
    <property type="entry name" value="AA_TRNA_LIGASE_II_ALA"/>
    <property type="match status" value="1"/>
</dbReference>
<feature type="chain" id="PRO_0000075211" description="Alanine--tRNA ligase">
    <location>
        <begin position="1"/>
        <end position="872"/>
    </location>
</feature>
<feature type="binding site" evidence="1">
    <location>
        <position position="567"/>
    </location>
    <ligand>
        <name>Zn(2+)</name>
        <dbReference type="ChEBI" id="CHEBI:29105"/>
    </ligand>
</feature>
<feature type="binding site" evidence="1">
    <location>
        <position position="571"/>
    </location>
    <ligand>
        <name>Zn(2+)</name>
        <dbReference type="ChEBI" id="CHEBI:29105"/>
    </ligand>
</feature>
<feature type="binding site" evidence="1">
    <location>
        <position position="669"/>
    </location>
    <ligand>
        <name>Zn(2+)</name>
        <dbReference type="ChEBI" id="CHEBI:29105"/>
    </ligand>
</feature>
<feature type="binding site" evidence="1">
    <location>
        <position position="673"/>
    </location>
    <ligand>
        <name>Zn(2+)</name>
        <dbReference type="ChEBI" id="CHEBI:29105"/>
    </ligand>
</feature>
<protein>
    <recommendedName>
        <fullName evidence="1">Alanine--tRNA ligase</fullName>
        <ecNumber evidence="1">6.1.1.7</ecNumber>
    </recommendedName>
    <alternativeName>
        <fullName evidence="1">Alanyl-tRNA synthetase</fullName>
        <shortName evidence="1">AlaRS</shortName>
    </alternativeName>
</protein>
<reference key="1">
    <citation type="journal article" date="2002" name="Mol. Microbiol.">
        <title>Genome sequence of Streptococcus agalactiae, a pathogen causing invasive neonatal disease.</title>
        <authorList>
            <person name="Glaser P."/>
            <person name="Rusniok C."/>
            <person name="Buchrieser C."/>
            <person name="Chevalier F."/>
            <person name="Frangeul L."/>
            <person name="Msadek T."/>
            <person name="Zouine M."/>
            <person name="Couve E."/>
            <person name="Lalioui L."/>
            <person name="Poyart C."/>
            <person name="Trieu-Cuot P."/>
            <person name="Kunst F."/>
        </authorList>
    </citation>
    <scope>NUCLEOTIDE SEQUENCE [LARGE SCALE GENOMIC DNA]</scope>
    <source>
        <strain>NEM316</strain>
    </source>
</reference>
<evidence type="ECO:0000255" key="1">
    <source>
        <dbReference type="HAMAP-Rule" id="MF_00036"/>
    </source>
</evidence>
<keyword id="KW-0030">Aminoacyl-tRNA synthetase</keyword>
<keyword id="KW-0067">ATP-binding</keyword>
<keyword id="KW-0963">Cytoplasm</keyword>
<keyword id="KW-0436">Ligase</keyword>
<keyword id="KW-0479">Metal-binding</keyword>
<keyword id="KW-0547">Nucleotide-binding</keyword>
<keyword id="KW-0648">Protein biosynthesis</keyword>
<keyword id="KW-0694">RNA-binding</keyword>
<keyword id="KW-0820">tRNA-binding</keyword>
<keyword id="KW-0862">Zinc</keyword>
<comment type="function">
    <text evidence="1">Catalyzes the attachment of alanine to tRNA(Ala) in a two-step reaction: alanine is first activated by ATP to form Ala-AMP and then transferred to the acceptor end of tRNA(Ala). Also edits incorrectly charged Ser-tRNA(Ala) and Gly-tRNA(Ala) via its editing domain.</text>
</comment>
<comment type="catalytic activity">
    <reaction evidence="1">
        <text>tRNA(Ala) + L-alanine + ATP = L-alanyl-tRNA(Ala) + AMP + diphosphate</text>
        <dbReference type="Rhea" id="RHEA:12540"/>
        <dbReference type="Rhea" id="RHEA-COMP:9657"/>
        <dbReference type="Rhea" id="RHEA-COMP:9923"/>
        <dbReference type="ChEBI" id="CHEBI:30616"/>
        <dbReference type="ChEBI" id="CHEBI:33019"/>
        <dbReference type="ChEBI" id="CHEBI:57972"/>
        <dbReference type="ChEBI" id="CHEBI:78442"/>
        <dbReference type="ChEBI" id="CHEBI:78497"/>
        <dbReference type="ChEBI" id="CHEBI:456215"/>
        <dbReference type="EC" id="6.1.1.7"/>
    </reaction>
</comment>
<comment type="cofactor">
    <cofactor evidence="1">
        <name>Zn(2+)</name>
        <dbReference type="ChEBI" id="CHEBI:29105"/>
    </cofactor>
    <text evidence="1">Binds 1 zinc ion per subunit.</text>
</comment>
<comment type="subcellular location">
    <subcellularLocation>
        <location evidence="1">Cytoplasm</location>
    </subcellularLocation>
</comment>
<comment type="domain">
    <text evidence="1">Consists of three domains; the N-terminal catalytic domain, the editing domain and the C-terminal C-Ala domain. The editing domain removes incorrectly charged amino acids, while the C-Ala domain, along with tRNA(Ala), serves as a bridge to cooperatively bring together the editing and aminoacylation centers thus stimulating deacylation of misacylated tRNAs.</text>
</comment>
<comment type="similarity">
    <text evidence="1">Belongs to the class-II aminoacyl-tRNA synthetase family.</text>
</comment>
<gene>
    <name evidence="1" type="primary">alaS</name>
    <name type="ordered locus">gbs0829</name>
</gene>
<proteinExistence type="inferred from homology"/>
<sequence>MKELSSAQIRQMWLDFWKSKGHSVEPSANLVPVNDPTLLWINSGVATLKKYFDGSVIPENPRITNAQKSIRTNDIENVGKTARHHTMFEMLGNFSIGDYFRDEAIEWGFELLTSPEWFDFPKDKLYMTYYPDDKDSYNRWIACGVEPSHLVPIEDNFWEIGAGPSGPDTEIFFDRGEDFDPDNIGLRLLAEDIENDRYIEIWNIVLSQFNADPAVPRSEYKELPNKNIDTGAGLERLAAVMQGAKTNFETDLFMPIIREVEKLSGKTYDPDGDNMSFKVIADHIRALSFAIGDGALPGNEGRGYVLRRLLRRAVMHGRRLGINETFLYKLVPTVGQIMESYYPEVLEKRDFIEKIVKREEETFARTIDAGSGHLDSLLAQLKAEGKDTLEGKDIFKLYDTYGFPVELTEELAEDAGYKIDHEGFKSAMKEQQDRARAAVVKGGSMGMQNETLAGIVEESRFEYDTYSLESSLSVIIADNERTEAVSEGQALLVFAQTPFYAEMGGQVADTGRIKNDKGDTVAEVVDVQKAPNGQPLHTVNVLASLSVGTNYTLEINKERRLAVEKNHTATHLLHAALHNVIGEHATQAGSLNEEEFLRFDFTHFEAVSNEELRHIEQEVNEQIWNALTITTTETDVETAKEMGAMALFGEKYGKVVRVVQIGNYSVELCGGTHLNNSSEIGLFKIVKEEGIGSGTRRIIAVTGRQAFEAYRNQEDALKEIAATVKAPQLKDAAAKVQALSDSLRDLQKENVELKEKAAAAAAGDVFKDIQEAKGVRFIASQVDVADAGALRTFADNWKQKDYSDVLVLVAAIGEKVNVLVASKTKDVHAGNMIKGLAPIVAGRGGGKPDMAMAGGSDASKIAELLAAVAENL</sequence>